<proteinExistence type="evidence at transcript level"/>
<comment type="function">
    <text evidence="1 4">Essential multidomain scaffolding protein required for normal development (By similarity). Recruits channels, receptors and signaling molecules to discrete plasma membrane domains in polarized cells. Promotes epithelial cell layer barrier function via maintaining cell-cell adhesion (By similarity). May play a role in adherens junction assembly, signal transduction and cell proliferation.</text>
</comment>
<comment type="subcellular location">
    <subcellularLocation>
        <location evidence="2">Cell membrane</location>
        <topology evidence="2">Peripheral membrane protein</topology>
    </subcellularLocation>
    <subcellularLocation>
        <location evidence="3">Endoplasmic reticulum membrane</location>
    </subcellularLocation>
    <subcellularLocation>
        <location evidence="2">Cell junction</location>
    </subcellularLocation>
    <subcellularLocation>
        <location evidence="2">Cytoplasm</location>
    </subcellularLocation>
    <subcellularLocation>
        <location evidence="2">Apical cell membrane</location>
    </subcellularLocation>
</comment>
<comment type="alternative products">
    <event type="alternative splicing"/>
    <isoform>
        <id>Q28C55-1</id>
        <name>1</name>
        <sequence type="displayed"/>
    </isoform>
    <isoform>
        <id>Q28C55-2</id>
        <name>2</name>
        <sequence type="described" ref="VSP_036927 VSP_036928"/>
    </isoform>
</comment>
<comment type="similarity">
    <text evidence="11">Belongs to the MAGUK family.</text>
</comment>
<protein>
    <recommendedName>
        <fullName>Disks large homolog 1</fullName>
    </recommendedName>
</protein>
<name>DLG1_XENTR</name>
<sequence>MPVRKQDTQRALTLLEEYRCKLHQTEDKQLRKSIERVIGIFQSNLFQALIDIQEFYEVTLLDNPKSSDNAKPTEPVQTINTWEYSSLPNSTATCETLPSSLILNVEKYRYPDDDITSQEPSSPHMLNDGRNVELVQISEKNISQKENIQGLVSHSLISPLKTPEADTPCPPIVPVIPVIPVPAESNVIPSSTPQANPPPVIVNTDLETPAYVNGTDAEYEYEEITLERGTSGLGFSIAGGTDNPHIGDDISIFITKIISGGAAAQDGRLRVNDCILRVNEVDVHDVTHSKAVEALKEAGSIVRLYVRRRKPVTEKIMDIKLVKGPKGLGFSIAGGVGNQHIPGDNSIYVTKIIEGGAAHKDGRLQIGDKLLAVNTVCLEEVSHEDAVTALKNTSDFVNLKVAKPTTMYMNDNYAPPDITNSYSQQVDNHISPSGFIGHPLPPSPGRYSPAPKGMLEDDDLTREPRKVVLQRGTTGLGFNIVGGEDGEGIFISFILAGGPADLSGELQKGDRIMSVNGVDLKSATHEQAAAALKNAGQTVTIVAQYRPEEYSRFEAKIHDLREQMMNSSISSGSGSLRTSQKRSLYVRALFDYDKTKDSGLPSQGLNFKFGDILHVVNASDDEWWQARQVTADGESEEIGVIPSKRRVEKKERARLKTVKFNSKARGDKGQSFNDKRKKNLFSRKFPFYKNKDQSEMETSDVDQHVTSNASDSESSYRGQEEYVLSYEPVNQQEVNYSRPVIILGPTKDRVNDDLISEFPEKFGSCVPHTTRPKRDYEIDGRDYHFVTSREQMEKDIQDHRFIEAGQYNSHLYGTSVQSVKEVAERGKHCILDVSGNAIKRLQIAQLYPIAIFIKPKSVENIIEMSKRVTEEQGRKTYERAMKLEQEFTEHFTAIVQGDTLEEIYNQIKQIIEEQSSTFIWVPAKEKL</sequence>
<keyword id="KW-0025">Alternative splicing</keyword>
<keyword id="KW-0965">Cell junction</keyword>
<keyword id="KW-1003">Cell membrane</keyword>
<keyword id="KW-0963">Cytoplasm</keyword>
<keyword id="KW-0256">Endoplasmic reticulum</keyword>
<keyword id="KW-0472">Membrane</keyword>
<keyword id="KW-1185">Reference proteome</keyword>
<keyword id="KW-0677">Repeat</keyword>
<keyword id="KW-0728">SH3 domain</keyword>
<organism>
    <name type="scientific">Xenopus tropicalis</name>
    <name type="common">Western clawed frog</name>
    <name type="synonym">Silurana tropicalis</name>
    <dbReference type="NCBI Taxonomy" id="8364"/>
    <lineage>
        <taxon>Eukaryota</taxon>
        <taxon>Metazoa</taxon>
        <taxon>Chordata</taxon>
        <taxon>Craniata</taxon>
        <taxon>Vertebrata</taxon>
        <taxon>Euteleostomi</taxon>
        <taxon>Amphibia</taxon>
        <taxon>Batrachia</taxon>
        <taxon>Anura</taxon>
        <taxon>Pipoidea</taxon>
        <taxon>Pipidae</taxon>
        <taxon>Xenopodinae</taxon>
        <taxon>Xenopus</taxon>
        <taxon>Silurana</taxon>
    </lineage>
</organism>
<evidence type="ECO:0000250" key="1">
    <source>
        <dbReference type="UniProtKB" id="A0A8C0TYJ0"/>
    </source>
</evidence>
<evidence type="ECO:0000250" key="2">
    <source>
        <dbReference type="UniProtKB" id="Q12959"/>
    </source>
</evidence>
<evidence type="ECO:0000250" key="3">
    <source>
        <dbReference type="UniProtKB" id="Q62696"/>
    </source>
</evidence>
<evidence type="ECO:0000250" key="4">
    <source>
        <dbReference type="UniProtKB" id="Q811D0"/>
    </source>
</evidence>
<evidence type="ECO:0000255" key="5">
    <source>
        <dbReference type="PROSITE-ProRule" id="PRU00100"/>
    </source>
</evidence>
<evidence type="ECO:0000255" key="6">
    <source>
        <dbReference type="PROSITE-ProRule" id="PRU00143"/>
    </source>
</evidence>
<evidence type="ECO:0000255" key="7">
    <source>
        <dbReference type="PROSITE-ProRule" id="PRU00192"/>
    </source>
</evidence>
<evidence type="ECO:0000255" key="8">
    <source>
        <dbReference type="PROSITE-ProRule" id="PRU00365"/>
    </source>
</evidence>
<evidence type="ECO:0000256" key="9">
    <source>
        <dbReference type="SAM" id="MobiDB-lite"/>
    </source>
</evidence>
<evidence type="ECO:0000303" key="10">
    <source ref="2"/>
</evidence>
<evidence type="ECO:0000305" key="11"/>
<dbReference type="EMBL" id="CR942446">
    <property type="protein sequence ID" value="CAJ82322.1"/>
    <property type="molecule type" value="mRNA"/>
</dbReference>
<dbReference type="EMBL" id="BC161021">
    <property type="protein sequence ID" value="AAI61021.1"/>
    <property type="molecule type" value="mRNA"/>
</dbReference>
<dbReference type="RefSeq" id="NP_001039116.1">
    <molecule id="Q28C55-1"/>
    <property type="nucleotide sequence ID" value="NM_001045651.1"/>
</dbReference>
<dbReference type="SMR" id="Q28C55"/>
<dbReference type="FunCoup" id="Q28C55">
    <property type="interactions" value="1786"/>
</dbReference>
<dbReference type="STRING" id="8364.ENSXETP00000013696"/>
<dbReference type="PaxDb" id="8364-ENSXETP00000007496"/>
<dbReference type="ABCD" id="Q28C55">
    <property type="antibodies" value="1 sequenced antibody"/>
</dbReference>
<dbReference type="GeneID" id="733937"/>
<dbReference type="KEGG" id="xtr:733937"/>
<dbReference type="AGR" id="Xenbase:XB-GENE-1016132"/>
<dbReference type="CTD" id="1739"/>
<dbReference type="Xenbase" id="XB-GENE-1016132">
    <property type="gene designation" value="dlg1"/>
</dbReference>
<dbReference type="eggNOG" id="KOG0708">
    <property type="taxonomic scope" value="Eukaryota"/>
</dbReference>
<dbReference type="HOGENOM" id="CLU_001715_4_3_1"/>
<dbReference type="InParanoid" id="Q28C55"/>
<dbReference type="OrthoDB" id="78824at2759"/>
<dbReference type="Reactome" id="R-XTR-438066">
    <property type="pathway name" value="Unblocking of NMDA receptors, glutamate binding and activation"/>
</dbReference>
<dbReference type="Reactome" id="R-XTR-8849932">
    <property type="pathway name" value="Synaptic adhesion-like molecules"/>
</dbReference>
<dbReference type="Proteomes" id="UP000008143">
    <property type="component" value="Chromosome 5"/>
</dbReference>
<dbReference type="Bgee" id="ENSXETG00000003464">
    <property type="expression patterns" value="Expressed in 2-cell stage embryo and 13 other cell types or tissues"/>
</dbReference>
<dbReference type="GO" id="GO:0070161">
    <property type="term" value="C:anchoring junction"/>
    <property type="evidence" value="ECO:0007669"/>
    <property type="project" value="UniProtKB-SubCell"/>
</dbReference>
<dbReference type="GO" id="GO:0016324">
    <property type="term" value="C:apical plasma membrane"/>
    <property type="evidence" value="ECO:0007669"/>
    <property type="project" value="UniProtKB-SubCell"/>
</dbReference>
<dbReference type="GO" id="GO:0005789">
    <property type="term" value="C:endoplasmic reticulum membrane"/>
    <property type="evidence" value="ECO:0007669"/>
    <property type="project" value="UniProtKB-SubCell"/>
</dbReference>
<dbReference type="GO" id="GO:0031594">
    <property type="term" value="C:neuromuscular junction"/>
    <property type="evidence" value="ECO:0007669"/>
    <property type="project" value="InterPro"/>
</dbReference>
<dbReference type="GO" id="GO:0043005">
    <property type="term" value="C:neuron projection"/>
    <property type="evidence" value="ECO:0007669"/>
    <property type="project" value="InterPro"/>
</dbReference>
<dbReference type="GO" id="GO:0019900">
    <property type="term" value="F:kinase binding"/>
    <property type="evidence" value="ECO:0007669"/>
    <property type="project" value="InterPro"/>
</dbReference>
<dbReference type="GO" id="GO:0007268">
    <property type="term" value="P:chemical synaptic transmission"/>
    <property type="evidence" value="ECO:0007669"/>
    <property type="project" value="InterPro"/>
</dbReference>
<dbReference type="GO" id="GO:0010669">
    <property type="term" value="P:epithelial structure maintenance"/>
    <property type="evidence" value="ECO:0000250"/>
    <property type="project" value="UniProtKB"/>
</dbReference>
<dbReference type="GO" id="GO:0036268">
    <property type="term" value="P:swimming"/>
    <property type="evidence" value="ECO:0000315"/>
    <property type="project" value="Xenbase"/>
</dbReference>
<dbReference type="CDD" id="cd00071">
    <property type="entry name" value="GMPK"/>
    <property type="match status" value="1"/>
</dbReference>
<dbReference type="CDD" id="cd06723">
    <property type="entry name" value="PDZ1_Dlg1-2-4-like"/>
    <property type="match status" value="1"/>
</dbReference>
<dbReference type="CDD" id="cd06724">
    <property type="entry name" value="PDZ2_Dlg1-2-4-like"/>
    <property type="match status" value="1"/>
</dbReference>
<dbReference type="CDD" id="cd06795">
    <property type="entry name" value="PDZ3_Dlg1-2-4-like"/>
    <property type="match status" value="1"/>
</dbReference>
<dbReference type="CDD" id="cd12031">
    <property type="entry name" value="SH3_DLG1"/>
    <property type="match status" value="1"/>
</dbReference>
<dbReference type="FunFam" id="3.40.50.300:FF:001402">
    <property type="entry name" value="Discs, large homolog 3 (Drosophila)"/>
    <property type="match status" value="1"/>
</dbReference>
<dbReference type="FunFam" id="1.10.287.470:FF:000001">
    <property type="entry name" value="Disks large 1 isoform X3"/>
    <property type="match status" value="1"/>
</dbReference>
<dbReference type="FunFam" id="2.30.30.40:FF:000008">
    <property type="entry name" value="Disks large homolog 1 isoform 2"/>
    <property type="match status" value="1"/>
</dbReference>
<dbReference type="FunFam" id="2.30.42.10:FF:000001">
    <property type="entry name" value="Disks large homolog 1 isoform 2"/>
    <property type="match status" value="1"/>
</dbReference>
<dbReference type="FunFam" id="3.30.63.10:FF:000001">
    <property type="entry name" value="Disks large homolog 1 isoform 2"/>
    <property type="match status" value="1"/>
</dbReference>
<dbReference type="FunFam" id="2.30.30.40:FF:000058">
    <property type="entry name" value="Disks large homolog 1 isoform X1"/>
    <property type="match status" value="1"/>
</dbReference>
<dbReference type="FunFam" id="2.30.42.10:FF:000049">
    <property type="entry name" value="disks large homolog 1 isoform X1"/>
    <property type="match status" value="1"/>
</dbReference>
<dbReference type="FunFam" id="2.30.42.10:FF:000002">
    <property type="entry name" value="Disks large homolog 4 isoform 2"/>
    <property type="match status" value="1"/>
</dbReference>
<dbReference type="Gene3D" id="2.30.42.10">
    <property type="match status" value="3"/>
</dbReference>
<dbReference type="Gene3D" id="3.30.63.10">
    <property type="entry name" value="Guanylate Kinase phosphate binding domain"/>
    <property type="match status" value="1"/>
</dbReference>
<dbReference type="Gene3D" id="1.10.287.470">
    <property type="entry name" value="Helix hairpin bin"/>
    <property type="match status" value="1"/>
</dbReference>
<dbReference type="Gene3D" id="3.40.50.300">
    <property type="entry name" value="P-loop containing nucleotide triphosphate hydrolases"/>
    <property type="match status" value="1"/>
</dbReference>
<dbReference type="Gene3D" id="2.30.30.40">
    <property type="entry name" value="SH3 Domains"/>
    <property type="match status" value="2"/>
</dbReference>
<dbReference type="InterPro" id="IPR019583">
    <property type="entry name" value="DLG1-4_PDZ_assoc"/>
</dbReference>
<dbReference type="InterPro" id="IPR016313">
    <property type="entry name" value="DLG1-like"/>
</dbReference>
<dbReference type="InterPro" id="IPR019590">
    <property type="entry name" value="DLG1_PEST_dom"/>
</dbReference>
<dbReference type="InterPro" id="IPR008145">
    <property type="entry name" value="GK/Ca_channel_bsu"/>
</dbReference>
<dbReference type="InterPro" id="IPR008144">
    <property type="entry name" value="Guanylate_kin-like_dom"/>
</dbReference>
<dbReference type="InterPro" id="IPR020590">
    <property type="entry name" value="Guanylate_kinase_CS"/>
</dbReference>
<dbReference type="InterPro" id="IPR015143">
    <property type="entry name" value="L27_1"/>
</dbReference>
<dbReference type="InterPro" id="IPR004172">
    <property type="entry name" value="L27_dom"/>
</dbReference>
<dbReference type="InterPro" id="IPR036892">
    <property type="entry name" value="L27_dom_sf"/>
</dbReference>
<dbReference type="InterPro" id="IPR027417">
    <property type="entry name" value="P-loop_NTPase"/>
</dbReference>
<dbReference type="InterPro" id="IPR001478">
    <property type="entry name" value="PDZ"/>
</dbReference>
<dbReference type="InterPro" id="IPR036034">
    <property type="entry name" value="PDZ_sf"/>
</dbReference>
<dbReference type="InterPro" id="IPR036028">
    <property type="entry name" value="SH3-like_dom_sf"/>
</dbReference>
<dbReference type="InterPro" id="IPR001452">
    <property type="entry name" value="SH3_domain"/>
</dbReference>
<dbReference type="InterPro" id="IPR050614">
    <property type="entry name" value="Synaptic_Scaffolding_LAP-MAGUK"/>
</dbReference>
<dbReference type="PANTHER" id="PTHR23119">
    <property type="entry name" value="DISCS LARGE"/>
    <property type="match status" value="1"/>
</dbReference>
<dbReference type="PANTHER" id="PTHR23119:SF5">
    <property type="entry name" value="DISKS LARGE HOMOLOG 1"/>
    <property type="match status" value="1"/>
</dbReference>
<dbReference type="Pfam" id="PF00625">
    <property type="entry name" value="Guanylate_kin"/>
    <property type="match status" value="1"/>
</dbReference>
<dbReference type="Pfam" id="PF09058">
    <property type="entry name" value="L27_1"/>
    <property type="match status" value="1"/>
</dbReference>
<dbReference type="Pfam" id="PF10608">
    <property type="entry name" value="MAGUK_N_PEST"/>
    <property type="match status" value="1"/>
</dbReference>
<dbReference type="Pfam" id="PF00595">
    <property type="entry name" value="PDZ"/>
    <property type="match status" value="3"/>
</dbReference>
<dbReference type="Pfam" id="PF10600">
    <property type="entry name" value="PDZ_assoc"/>
    <property type="match status" value="1"/>
</dbReference>
<dbReference type="Pfam" id="PF00018">
    <property type="entry name" value="SH3_1"/>
    <property type="match status" value="1"/>
</dbReference>
<dbReference type="PIRSF" id="PIRSF001741">
    <property type="entry name" value="MAGUK_DLGH"/>
    <property type="match status" value="1"/>
</dbReference>
<dbReference type="SMART" id="SM00072">
    <property type="entry name" value="GuKc"/>
    <property type="match status" value="1"/>
</dbReference>
<dbReference type="SMART" id="SM00569">
    <property type="entry name" value="L27"/>
    <property type="match status" value="1"/>
</dbReference>
<dbReference type="SMART" id="SM01277">
    <property type="entry name" value="MAGUK_N_PEST"/>
    <property type="match status" value="1"/>
</dbReference>
<dbReference type="SMART" id="SM00228">
    <property type="entry name" value="PDZ"/>
    <property type="match status" value="3"/>
</dbReference>
<dbReference type="SMART" id="SM00326">
    <property type="entry name" value="SH3"/>
    <property type="match status" value="1"/>
</dbReference>
<dbReference type="SUPFAM" id="SSF101288">
    <property type="entry name" value="L27 domain"/>
    <property type="match status" value="1"/>
</dbReference>
<dbReference type="SUPFAM" id="SSF52540">
    <property type="entry name" value="P-loop containing nucleoside triphosphate hydrolases"/>
    <property type="match status" value="1"/>
</dbReference>
<dbReference type="SUPFAM" id="SSF50156">
    <property type="entry name" value="PDZ domain-like"/>
    <property type="match status" value="3"/>
</dbReference>
<dbReference type="SUPFAM" id="SSF50044">
    <property type="entry name" value="SH3-domain"/>
    <property type="match status" value="1"/>
</dbReference>
<dbReference type="PROSITE" id="PS00856">
    <property type="entry name" value="GUANYLATE_KINASE_1"/>
    <property type="match status" value="1"/>
</dbReference>
<dbReference type="PROSITE" id="PS50052">
    <property type="entry name" value="GUANYLATE_KINASE_2"/>
    <property type="match status" value="1"/>
</dbReference>
<dbReference type="PROSITE" id="PS51022">
    <property type="entry name" value="L27"/>
    <property type="match status" value="1"/>
</dbReference>
<dbReference type="PROSITE" id="PS50106">
    <property type="entry name" value="PDZ"/>
    <property type="match status" value="3"/>
</dbReference>
<dbReference type="PROSITE" id="PS50002">
    <property type="entry name" value="SH3"/>
    <property type="match status" value="1"/>
</dbReference>
<feature type="chain" id="PRO_0000370362" description="Disks large homolog 1">
    <location>
        <begin position="1"/>
        <end position="927"/>
    </location>
</feature>
<feature type="domain" description="L27" evidence="8">
    <location>
        <begin position="4"/>
        <end position="64"/>
    </location>
</feature>
<feature type="domain" description="PDZ 1" evidence="6">
    <location>
        <begin position="223"/>
        <end position="310"/>
    </location>
</feature>
<feature type="domain" description="PDZ 2" evidence="6">
    <location>
        <begin position="318"/>
        <end position="405"/>
    </location>
</feature>
<feature type="domain" description="PDZ 3" evidence="6">
    <location>
        <begin position="466"/>
        <end position="547"/>
    </location>
</feature>
<feature type="domain" description="SH3" evidence="7">
    <location>
        <begin position="581"/>
        <end position="651"/>
    </location>
</feature>
<feature type="domain" description="Guanylate kinase-like" evidence="5">
    <location>
        <begin position="737"/>
        <end position="912"/>
    </location>
</feature>
<feature type="region of interest" description="Disordered" evidence="9">
    <location>
        <begin position="692"/>
        <end position="719"/>
    </location>
</feature>
<feature type="compositionally biased region" description="Polar residues" evidence="9">
    <location>
        <begin position="704"/>
        <end position="717"/>
    </location>
</feature>
<feature type="splice variant" id="VSP_036927" description="In isoform 2." evidence="10">
    <original>QSFNDKRKKNLFSRKFP</original>
    <variation>VVKKNMYYHMSQSINKK</variation>
    <location>
        <begin position="670"/>
        <end position="686"/>
    </location>
</feature>
<feature type="splice variant" id="VSP_036928" description="In isoform 2." evidence="10">
    <location>
        <begin position="687"/>
        <end position="927"/>
    </location>
</feature>
<reference key="1">
    <citation type="submission" date="2006-10" db="EMBL/GenBank/DDBJ databases">
        <authorList>
            <consortium name="Sanger Xenopus tropicalis EST/cDNA project"/>
        </authorList>
    </citation>
    <scope>NUCLEOTIDE SEQUENCE [LARGE SCALE MRNA] (ISOFORM 1)</scope>
    <source>
        <tissue>Egg</tissue>
    </source>
</reference>
<reference key="2">
    <citation type="submission" date="2008-03" db="EMBL/GenBank/DDBJ databases">
        <authorList>
            <consortium name="NIH - Xenopus Gene Collection (XGC) project"/>
        </authorList>
    </citation>
    <scope>NUCLEOTIDE SEQUENCE [LARGE SCALE MRNA] (ISOFORM 2)</scope>
    <source>
        <tissue>Testis</tissue>
    </source>
</reference>
<accession>Q28C55</accession>
<accession>B1H2J2</accession>
<gene>
    <name type="primary">dlg1</name>
    <name type="ORF">TEgg018e06.1</name>
</gene>